<keyword id="KW-0963">Cytoplasm</keyword>
<keyword id="KW-0444">Lipid biosynthesis</keyword>
<keyword id="KW-0443">Lipid metabolism</keyword>
<keyword id="KW-0594">Phospholipid biosynthesis</keyword>
<keyword id="KW-1208">Phospholipid metabolism</keyword>
<keyword id="KW-0808">Transferase</keyword>
<sequence>MTIKVSIDASGGDYGISVTIKAGIKALDVFQDLYLYFVGDESSIKAELNKHLSNTFSSRYTIIHASEVVLMNESPAIALRKKKDSSMRVAINLVKTLKVNACVSAGNTGALMAISRFVLRTIKGIDRPAIMGRMPTMIGHTHMLDLGANVDSKPEALIEFATMGSIAVKHIENIVSPTIGLLNIGEEDMKGSEKIKKTAELLKASNLNYVGFVEGDDIYKGTVNLIVCDGFEGNIALKASEGVVLMMGYYLKQAFTRNLLTKLVALIATPVLRDFKSSLNPGKYNGASLLGLQGIVVKSHGSANVDSFLAAITEAYVEAHAKISDKISLQISKELEHNE</sequence>
<organism>
    <name type="scientific">Ruthia magnifica subsp. Calyptogena magnifica</name>
    <dbReference type="NCBI Taxonomy" id="413404"/>
    <lineage>
        <taxon>Bacteria</taxon>
        <taxon>Pseudomonadati</taxon>
        <taxon>Pseudomonadota</taxon>
        <taxon>Gammaproteobacteria</taxon>
        <taxon>Candidatus Pseudothioglobaceae</taxon>
        <taxon>Candidatus Ruthturnera</taxon>
    </lineage>
</organism>
<name>PLSX_RUTMC</name>
<accession>A1AWD3</accession>
<feature type="chain" id="PRO_1000001820" description="Phosphate acyltransferase">
    <location>
        <begin position="1"/>
        <end position="339"/>
    </location>
</feature>
<dbReference type="EC" id="2.3.1.274" evidence="1"/>
<dbReference type="EMBL" id="CP000488">
    <property type="protein sequence ID" value="ABL02240.1"/>
    <property type="molecule type" value="Genomic_DNA"/>
</dbReference>
<dbReference type="RefSeq" id="WP_011737865.1">
    <property type="nucleotide sequence ID" value="NC_008610.1"/>
</dbReference>
<dbReference type="SMR" id="A1AWD3"/>
<dbReference type="STRING" id="413404.Rmag_0484"/>
<dbReference type="KEGG" id="rma:Rmag_0484"/>
<dbReference type="eggNOG" id="COG0416">
    <property type="taxonomic scope" value="Bacteria"/>
</dbReference>
<dbReference type="HOGENOM" id="CLU_039379_1_0_6"/>
<dbReference type="OrthoDB" id="9806408at2"/>
<dbReference type="UniPathway" id="UPA00085"/>
<dbReference type="Proteomes" id="UP000002587">
    <property type="component" value="Chromosome"/>
</dbReference>
<dbReference type="GO" id="GO:0005737">
    <property type="term" value="C:cytoplasm"/>
    <property type="evidence" value="ECO:0007669"/>
    <property type="project" value="UniProtKB-SubCell"/>
</dbReference>
<dbReference type="GO" id="GO:0043811">
    <property type="term" value="F:phosphate:acyl-[acyl carrier protein] acyltransferase activity"/>
    <property type="evidence" value="ECO:0007669"/>
    <property type="project" value="UniProtKB-UniRule"/>
</dbReference>
<dbReference type="GO" id="GO:0006633">
    <property type="term" value="P:fatty acid biosynthetic process"/>
    <property type="evidence" value="ECO:0007669"/>
    <property type="project" value="UniProtKB-UniRule"/>
</dbReference>
<dbReference type="GO" id="GO:0008654">
    <property type="term" value="P:phospholipid biosynthetic process"/>
    <property type="evidence" value="ECO:0007669"/>
    <property type="project" value="UniProtKB-KW"/>
</dbReference>
<dbReference type="Gene3D" id="3.40.718.10">
    <property type="entry name" value="Isopropylmalate Dehydrogenase"/>
    <property type="match status" value="1"/>
</dbReference>
<dbReference type="HAMAP" id="MF_00019">
    <property type="entry name" value="PlsX"/>
    <property type="match status" value="1"/>
</dbReference>
<dbReference type="InterPro" id="IPR003664">
    <property type="entry name" value="FA_synthesis"/>
</dbReference>
<dbReference type="InterPro" id="IPR012281">
    <property type="entry name" value="Phospholipid_synth_PlsX-like"/>
</dbReference>
<dbReference type="NCBIfam" id="TIGR00182">
    <property type="entry name" value="plsX"/>
    <property type="match status" value="1"/>
</dbReference>
<dbReference type="PANTHER" id="PTHR30100">
    <property type="entry name" value="FATTY ACID/PHOSPHOLIPID SYNTHESIS PROTEIN PLSX"/>
    <property type="match status" value="1"/>
</dbReference>
<dbReference type="PANTHER" id="PTHR30100:SF1">
    <property type="entry name" value="PHOSPHATE ACYLTRANSFERASE"/>
    <property type="match status" value="1"/>
</dbReference>
<dbReference type="Pfam" id="PF02504">
    <property type="entry name" value="FA_synthesis"/>
    <property type="match status" value="1"/>
</dbReference>
<dbReference type="PIRSF" id="PIRSF002465">
    <property type="entry name" value="Phsphlp_syn_PlsX"/>
    <property type="match status" value="1"/>
</dbReference>
<dbReference type="SUPFAM" id="SSF53659">
    <property type="entry name" value="Isocitrate/Isopropylmalate dehydrogenase-like"/>
    <property type="match status" value="1"/>
</dbReference>
<reference key="1">
    <citation type="journal article" date="2007" name="Science">
        <title>The Calyptogena magnifica chemoautotrophic symbiont genome.</title>
        <authorList>
            <person name="Newton I.L.G."/>
            <person name="Woyke T."/>
            <person name="Auchtung T.A."/>
            <person name="Dilly G.F."/>
            <person name="Dutton R.J."/>
            <person name="Fisher M.C."/>
            <person name="Fontanez K.M."/>
            <person name="Lau E."/>
            <person name="Stewart F.J."/>
            <person name="Richardson P.M."/>
            <person name="Barry K.W."/>
            <person name="Saunders E."/>
            <person name="Detter J.C."/>
            <person name="Wu D."/>
            <person name="Eisen J.A."/>
            <person name="Cavanaugh C.M."/>
        </authorList>
    </citation>
    <scope>NUCLEOTIDE SEQUENCE [LARGE SCALE GENOMIC DNA]</scope>
</reference>
<proteinExistence type="inferred from homology"/>
<comment type="function">
    <text evidence="1">Catalyzes the reversible formation of acyl-phosphate (acyl-PO(4)) from acyl-[acyl-carrier-protein] (acyl-ACP). This enzyme utilizes acyl-ACP as fatty acyl donor, but not acyl-CoA.</text>
</comment>
<comment type="catalytic activity">
    <reaction evidence="1">
        <text>a fatty acyl-[ACP] + phosphate = an acyl phosphate + holo-[ACP]</text>
        <dbReference type="Rhea" id="RHEA:42292"/>
        <dbReference type="Rhea" id="RHEA-COMP:9685"/>
        <dbReference type="Rhea" id="RHEA-COMP:14125"/>
        <dbReference type="ChEBI" id="CHEBI:43474"/>
        <dbReference type="ChEBI" id="CHEBI:59918"/>
        <dbReference type="ChEBI" id="CHEBI:64479"/>
        <dbReference type="ChEBI" id="CHEBI:138651"/>
        <dbReference type="EC" id="2.3.1.274"/>
    </reaction>
</comment>
<comment type="pathway">
    <text evidence="1">Lipid metabolism; phospholipid metabolism.</text>
</comment>
<comment type="subunit">
    <text evidence="1">Homodimer. Probably interacts with PlsY.</text>
</comment>
<comment type="subcellular location">
    <subcellularLocation>
        <location evidence="1">Cytoplasm</location>
    </subcellularLocation>
    <text evidence="1">Associated with the membrane possibly through PlsY.</text>
</comment>
<comment type="similarity">
    <text evidence="1">Belongs to the PlsX family.</text>
</comment>
<protein>
    <recommendedName>
        <fullName evidence="1">Phosphate acyltransferase</fullName>
        <ecNumber evidence="1">2.3.1.274</ecNumber>
    </recommendedName>
    <alternativeName>
        <fullName evidence="1">Acyl-ACP phosphotransacylase</fullName>
    </alternativeName>
    <alternativeName>
        <fullName evidence="1">Acyl-[acyl-carrier-protein]--phosphate acyltransferase</fullName>
    </alternativeName>
    <alternativeName>
        <fullName evidence="1">Phosphate-acyl-ACP acyltransferase</fullName>
    </alternativeName>
</protein>
<evidence type="ECO:0000255" key="1">
    <source>
        <dbReference type="HAMAP-Rule" id="MF_00019"/>
    </source>
</evidence>
<gene>
    <name evidence="1" type="primary">plsX</name>
    <name type="ordered locus">Rmag_0484</name>
</gene>